<keyword id="KW-0143">Chaperone</keyword>
<keyword id="KW-0903">Direct protein sequencing</keyword>
<keyword id="KW-0496">Mitochondrion</keyword>
<keyword id="KW-1185">Reference proteome</keyword>
<keyword id="KW-0809">Transit peptide</keyword>
<dbReference type="EMBL" id="X78350">
    <property type="protein sequence ID" value="CAA55145.1"/>
    <property type="molecule type" value="Genomic_DNA"/>
</dbReference>
<dbReference type="EMBL" id="D26059">
    <property type="protein sequence ID" value="BAA05058.1"/>
    <property type="molecule type" value="Genomic_DNA"/>
</dbReference>
<dbReference type="EMBL" id="U09565">
    <property type="protein sequence ID" value="AAA19253.1"/>
    <property type="molecule type" value="Unassigned_RNA"/>
</dbReference>
<dbReference type="EMBL" id="Z75140">
    <property type="protein sequence ID" value="CAA99452.1"/>
    <property type="molecule type" value="Genomic_DNA"/>
</dbReference>
<dbReference type="EMBL" id="BK006948">
    <property type="protein sequence ID" value="DAA11002.1"/>
    <property type="molecule type" value="Genomic_DNA"/>
</dbReference>
<dbReference type="PIR" id="S41760">
    <property type="entry name" value="S41760"/>
</dbReference>
<dbReference type="RefSeq" id="NP_014875.3">
    <property type="nucleotide sequence ID" value="NM_001183651.3"/>
</dbReference>
<dbReference type="SMR" id="P38523"/>
<dbReference type="BioGRID" id="34625">
    <property type="interactions" value="368"/>
</dbReference>
<dbReference type="ComplexPortal" id="CPX-539">
    <property type="entry name" value="TIM23 mitochondrial inner membrane pre-sequence translocase complex, motor variant"/>
</dbReference>
<dbReference type="DIP" id="DIP-775N"/>
<dbReference type="FunCoup" id="P38523">
    <property type="interactions" value="1069"/>
</dbReference>
<dbReference type="IntAct" id="P38523">
    <property type="interactions" value="36"/>
</dbReference>
<dbReference type="MINT" id="P38523"/>
<dbReference type="STRING" id="4932.YOR232W"/>
<dbReference type="TCDB" id="3.A.8.1.1">
    <property type="family name" value="the mitochondrial protein translocase (mpt) family"/>
</dbReference>
<dbReference type="GlyGen" id="P38523">
    <property type="glycosylation" value="1 site"/>
</dbReference>
<dbReference type="iPTMnet" id="P38523"/>
<dbReference type="MetOSite" id="P38523"/>
<dbReference type="PaxDb" id="4932-YOR232W"/>
<dbReference type="PeptideAtlas" id="P38523"/>
<dbReference type="EnsemblFungi" id="YOR232W_mRNA">
    <property type="protein sequence ID" value="YOR232W"/>
    <property type="gene ID" value="YOR232W"/>
</dbReference>
<dbReference type="GeneID" id="854407"/>
<dbReference type="KEGG" id="sce:YOR232W"/>
<dbReference type="AGR" id="SGD:S000005758"/>
<dbReference type="SGD" id="S000005758">
    <property type="gene designation" value="MGE1"/>
</dbReference>
<dbReference type="VEuPathDB" id="FungiDB:YOR232W"/>
<dbReference type="eggNOG" id="KOG3003">
    <property type="taxonomic scope" value="Eukaryota"/>
</dbReference>
<dbReference type="GeneTree" id="ENSGT00390000005589"/>
<dbReference type="HOGENOM" id="CLU_057217_0_0_1"/>
<dbReference type="InParanoid" id="P38523"/>
<dbReference type="OMA" id="PHRHQAI"/>
<dbReference type="OrthoDB" id="201635at2759"/>
<dbReference type="BioCyc" id="YEAST:G3O-33730-MONOMER"/>
<dbReference type="BioGRID-ORCS" id="854407">
    <property type="hits" value="10 hits in 10 CRISPR screens"/>
</dbReference>
<dbReference type="PRO" id="PR:P38523"/>
<dbReference type="Proteomes" id="UP000002311">
    <property type="component" value="Chromosome XV"/>
</dbReference>
<dbReference type="RNAct" id="P38523">
    <property type="molecule type" value="protein"/>
</dbReference>
<dbReference type="GO" id="GO:0005743">
    <property type="term" value="C:mitochondrial inner membrane"/>
    <property type="evidence" value="ECO:0000304"/>
    <property type="project" value="Reactome"/>
</dbReference>
<dbReference type="GO" id="GO:0005759">
    <property type="term" value="C:mitochondrial matrix"/>
    <property type="evidence" value="ECO:0000314"/>
    <property type="project" value="SGD"/>
</dbReference>
<dbReference type="GO" id="GO:0005739">
    <property type="term" value="C:mitochondrion"/>
    <property type="evidence" value="ECO:0007005"/>
    <property type="project" value="SGD"/>
</dbReference>
<dbReference type="GO" id="GO:0001405">
    <property type="term" value="C:PAM complex, Tim23 associated import motor"/>
    <property type="evidence" value="ECO:0000314"/>
    <property type="project" value="SGD"/>
</dbReference>
<dbReference type="GO" id="GO:0005744">
    <property type="term" value="C:TIM23 mitochondrial import inner membrane translocase complex"/>
    <property type="evidence" value="ECO:0000303"/>
    <property type="project" value="ComplexPortal"/>
</dbReference>
<dbReference type="GO" id="GO:0000774">
    <property type="term" value="F:adenyl-nucleotide exchange factor activity"/>
    <property type="evidence" value="ECO:0000314"/>
    <property type="project" value="SGD"/>
</dbReference>
<dbReference type="GO" id="GO:0042803">
    <property type="term" value="F:protein homodimerization activity"/>
    <property type="evidence" value="ECO:0007669"/>
    <property type="project" value="InterPro"/>
</dbReference>
<dbReference type="GO" id="GO:0051087">
    <property type="term" value="F:protein-folding chaperone binding"/>
    <property type="evidence" value="ECO:0007669"/>
    <property type="project" value="InterPro"/>
</dbReference>
<dbReference type="GO" id="GO:0051082">
    <property type="term" value="F:unfolded protein binding"/>
    <property type="evidence" value="ECO:0000318"/>
    <property type="project" value="GO_Central"/>
</dbReference>
<dbReference type="GO" id="GO:0006886">
    <property type="term" value="P:intracellular protein transport"/>
    <property type="evidence" value="ECO:0000303"/>
    <property type="project" value="ComplexPortal"/>
</dbReference>
<dbReference type="GO" id="GO:0030150">
    <property type="term" value="P:protein import into mitochondrial matrix"/>
    <property type="evidence" value="ECO:0000315"/>
    <property type="project" value="SGD"/>
</dbReference>
<dbReference type="GO" id="GO:0042026">
    <property type="term" value="P:protein refolding"/>
    <property type="evidence" value="ECO:0000314"/>
    <property type="project" value="SGD"/>
</dbReference>
<dbReference type="CDD" id="cd00446">
    <property type="entry name" value="GrpE"/>
    <property type="match status" value="1"/>
</dbReference>
<dbReference type="FunFam" id="2.30.22.10:FF:000002">
    <property type="entry name" value="GrpE protein homolog"/>
    <property type="match status" value="1"/>
</dbReference>
<dbReference type="FunFam" id="3.90.20.20:FF:000011">
    <property type="entry name" value="GrpE protein homolog"/>
    <property type="match status" value="1"/>
</dbReference>
<dbReference type="Gene3D" id="3.90.20.20">
    <property type="match status" value="1"/>
</dbReference>
<dbReference type="Gene3D" id="2.30.22.10">
    <property type="entry name" value="Head domain of nucleotide exchange factor GrpE"/>
    <property type="match status" value="1"/>
</dbReference>
<dbReference type="HAMAP" id="MF_01151">
    <property type="entry name" value="GrpE"/>
    <property type="match status" value="1"/>
</dbReference>
<dbReference type="InterPro" id="IPR000740">
    <property type="entry name" value="GrpE"/>
</dbReference>
<dbReference type="InterPro" id="IPR013805">
    <property type="entry name" value="GrpE_coiled_coil"/>
</dbReference>
<dbReference type="InterPro" id="IPR009012">
    <property type="entry name" value="GrpE_head"/>
</dbReference>
<dbReference type="PANTHER" id="PTHR21237">
    <property type="entry name" value="GRPE PROTEIN"/>
    <property type="match status" value="1"/>
</dbReference>
<dbReference type="PANTHER" id="PTHR21237:SF23">
    <property type="entry name" value="GRPE PROTEIN HOMOLOG, MITOCHONDRIAL"/>
    <property type="match status" value="1"/>
</dbReference>
<dbReference type="Pfam" id="PF01025">
    <property type="entry name" value="GrpE"/>
    <property type="match status" value="1"/>
</dbReference>
<dbReference type="PRINTS" id="PR00773">
    <property type="entry name" value="GRPEPROTEIN"/>
</dbReference>
<dbReference type="SUPFAM" id="SSF58014">
    <property type="entry name" value="Coiled-coil domain of nucleotide exchange factor GrpE"/>
    <property type="match status" value="1"/>
</dbReference>
<dbReference type="SUPFAM" id="SSF51064">
    <property type="entry name" value="Head domain of nucleotide exchange factor GrpE"/>
    <property type="match status" value="1"/>
</dbReference>
<dbReference type="PROSITE" id="PS01071">
    <property type="entry name" value="GRPE"/>
    <property type="match status" value="1"/>
</dbReference>
<name>GRPE_YEAST</name>
<protein>
    <recommendedName>
        <fullName>GrpE protein homolog, mitochondrial</fullName>
    </recommendedName>
</protein>
<evidence type="ECO:0000255" key="1"/>
<evidence type="ECO:0000256" key="2">
    <source>
        <dbReference type="SAM" id="MobiDB-lite"/>
    </source>
</evidence>
<evidence type="ECO:0000269" key="3">
    <source>
    </source>
</evidence>
<evidence type="ECO:0000269" key="4">
    <source>
    </source>
</evidence>
<evidence type="ECO:0000269" key="5">
    <source>
    </source>
</evidence>
<evidence type="ECO:0000305" key="6"/>
<evidence type="ECO:0000305" key="7">
    <source>
    </source>
</evidence>
<accession>P38523</accession>
<accession>D6W2T6</accession>
<gene>
    <name type="primary">MGE1</name>
    <name type="synonym">GRPE</name>
    <name type="synonym">GRPE1</name>
    <name type="synonym">YGE1</name>
    <name type="ordered locus">YOR232W</name>
    <name type="ORF">O5099</name>
</gene>
<proteinExistence type="evidence at protein level"/>
<reference key="1">
    <citation type="journal article" date="1994" name="EMBO J.">
        <title>A mitochondrial homolog of bacterial GrpE interacts with mitochondrial hsp70 and is essential for viability.</title>
        <authorList>
            <person name="Bolliger L."/>
            <person name="Deloche O."/>
            <person name="Glick B.S."/>
            <person name="Georgopoulos C."/>
            <person name="Jenoe P."/>
            <person name="Kronidou N."/>
            <person name="Horst M."/>
            <person name="Morishima N."/>
            <person name="Schatz G."/>
        </authorList>
    </citation>
    <scope>NUCLEOTIDE SEQUENCE [GENOMIC DNA]</scope>
    <scope>PROTEIN SEQUENCE OF 50-66; 91-96 AND 109-116</scope>
</reference>
<reference key="2">
    <citation type="journal article" date="1994" name="FEBS Lett.">
        <title>YGE1 is a yeast homologue of Escherichia coli grpE and is required for maintenance of mitochondrial functions.</title>
        <authorList>
            <person name="Ikeda E."/>
            <person name="Yoshida S."/>
            <person name="Mitsuzawa H."/>
            <person name="Uno I."/>
            <person name="Toh-e A."/>
        </authorList>
    </citation>
    <scope>NUCLEOTIDE SEQUENCE [GENOMIC DNA]</scope>
    <source>
        <strain>ATCC 26786 / X2180-1A</strain>
    </source>
</reference>
<reference key="3">
    <citation type="journal article" date="1994" name="FEBS Lett.">
        <authorList>
            <person name="Ikeda E."/>
            <person name="Yoshida S."/>
            <person name="Mitsuzawa H."/>
            <person name="Uno I."/>
            <person name="Toh-e A."/>
        </authorList>
    </citation>
    <scope>ERRATUM OF PUBMED:8112465</scope>
</reference>
<reference key="4">
    <citation type="journal article" date="1994" name="Proc. Natl. Acad. Sci. U.S.A.">
        <title>A role for a eukaryotic GrpE-related protein, Mge1p, in protein translocation.</title>
        <authorList>
            <person name="Laloraya S."/>
            <person name="Gambill D.B."/>
            <person name="Craig E.A."/>
        </authorList>
    </citation>
    <scope>NUCLEOTIDE SEQUENCE</scope>
    <source>
        <strain>ATCC 204508 / S288c</strain>
    </source>
</reference>
<reference key="5">
    <citation type="journal article" date="1996" name="Yeast">
        <title>Sequence and analysis of a 26.9 kb fragment from chromosome XV of the yeast Saccharomyces cerevisiae.</title>
        <authorList>
            <person name="Boyer J."/>
            <person name="Michaux G."/>
            <person name="Fairhead C."/>
            <person name="Gaillon L."/>
            <person name="Dujon B."/>
        </authorList>
    </citation>
    <scope>NUCLEOTIDE SEQUENCE [GENOMIC DNA]</scope>
    <source>
        <strain>ATCC 96604 / S288c / FY1679</strain>
    </source>
</reference>
<reference key="6">
    <citation type="journal article" date="1997" name="Nature">
        <title>The nucleotide sequence of Saccharomyces cerevisiae chromosome XV.</title>
        <authorList>
            <person name="Dujon B."/>
            <person name="Albermann K."/>
            <person name="Aldea M."/>
            <person name="Alexandraki D."/>
            <person name="Ansorge W."/>
            <person name="Arino J."/>
            <person name="Benes V."/>
            <person name="Bohn C."/>
            <person name="Bolotin-Fukuhara M."/>
            <person name="Bordonne R."/>
            <person name="Boyer J."/>
            <person name="Camasses A."/>
            <person name="Casamayor A."/>
            <person name="Casas C."/>
            <person name="Cheret G."/>
            <person name="Cziepluch C."/>
            <person name="Daignan-Fornier B."/>
            <person name="Dang V.-D."/>
            <person name="de Haan M."/>
            <person name="Delius H."/>
            <person name="Durand P."/>
            <person name="Fairhead C."/>
            <person name="Feldmann H."/>
            <person name="Gaillon L."/>
            <person name="Galisson F."/>
            <person name="Gamo F.-J."/>
            <person name="Gancedo C."/>
            <person name="Goffeau A."/>
            <person name="Goulding S.E."/>
            <person name="Grivell L.A."/>
            <person name="Habbig B."/>
            <person name="Hand N.J."/>
            <person name="Hani J."/>
            <person name="Hattenhorst U."/>
            <person name="Hebling U."/>
            <person name="Hernando Y."/>
            <person name="Herrero E."/>
            <person name="Heumann K."/>
            <person name="Hiesel R."/>
            <person name="Hilger F."/>
            <person name="Hofmann B."/>
            <person name="Hollenberg C.P."/>
            <person name="Hughes B."/>
            <person name="Jauniaux J.-C."/>
            <person name="Kalogeropoulos A."/>
            <person name="Katsoulou C."/>
            <person name="Kordes E."/>
            <person name="Lafuente M.J."/>
            <person name="Landt O."/>
            <person name="Louis E.J."/>
            <person name="Maarse A.C."/>
            <person name="Madania A."/>
            <person name="Mannhaupt G."/>
            <person name="Marck C."/>
            <person name="Martin R.P."/>
            <person name="Mewes H.-W."/>
            <person name="Michaux G."/>
            <person name="Paces V."/>
            <person name="Parle-McDermott A.G."/>
            <person name="Pearson B.M."/>
            <person name="Perrin A."/>
            <person name="Pettersson B."/>
            <person name="Poch O."/>
            <person name="Pohl T.M."/>
            <person name="Poirey R."/>
            <person name="Portetelle D."/>
            <person name="Pujol A."/>
            <person name="Purnelle B."/>
            <person name="Ramezani Rad M."/>
            <person name="Rechmann S."/>
            <person name="Schwager C."/>
            <person name="Schweizer M."/>
            <person name="Sor F."/>
            <person name="Sterky F."/>
            <person name="Tarassov I.A."/>
            <person name="Teodoru C."/>
            <person name="Tettelin H."/>
            <person name="Thierry A."/>
            <person name="Tobiasch E."/>
            <person name="Tzermia M."/>
            <person name="Uhlen M."/>
            <person name="Unseld M."/>
            <person name="Valens M."/>
            <person name="Vandenbol M."/>
            <person name="Vetter I."/>
            <person name="Vlcek C."/>
            <person name="Voet M."/>
            <person name="Volckaert G."/>
            <person name="Voss H."/>
            <person name="Wambutt R."/>
            <person name="Wedler H."/>
            <person name="Wiemann S."/>
            <person name="Winsor B."/>
            <person name="Wolfe K.H."/>
            <person name="Zollner A."/>
            <person name="Zumstein E."/>
            <person name="Kleine K."/>
        </authorList>
    </citation>
    <scope>NUCLEOTIDE SEQUENCE [LARGE SCALE GENOMIC DNA]</scope>
    <source>
        <strain>ATCC 204508 / S288c</strain>
    </source>
</reference>
<reference key="7">
    <citation type="journal article" date="2014" name="G3 (Bethesda)">
        <title>The reference genome sequence of Saccharomyces cerevisiae: Then and now.</title>
        <authorList>
            <person name="Engel S.R."/>
            <person name="Dietrich F.S."/>
            <person name="Fisk D.G."/>
            <person name="Binkley G."/>
            <person name="Balakrishnan R."/>
            <person name="Costanzo M.C."/>
            <person name="Dwight S.S."/>
            <person name="Hitz B.C."/>
            <person name="Karra K."/>
            <person name="Nash R.S."/>
            <person name="Weng S."/>
            <person name="Wong E.D."/>
            <person name="Lloyd P."/>
            <person name="Skrzypek M.S."/>
            <person name="Miyasato S.R."/>
            <person name="Simison M."/>
            <person name="Cherry J.M."/>
        </authorList>
    </citation>
    <scope>GENOME REANNOTATION</scope>
    <source>
        <strain>ATCC 204508 / S288c</strain>
    </source>
</reference>
<reference key="8">
    <citation type="journal article" date="1995" name="EMBO J.">
        <title>The role of the GrpE homologue, Mge1p, in mediating protein import and protein folding in mitochondria.</title>
        <authorList>
            <person name="Westermann B."/>
            <person name="Prip-Buus C."/>
            <person name="Neupert W."/>
            <person name="Schwarz E."/>
        </authorList>
    </citation>
    <scope>FUNCTION</scope>
</reference>
<reference key="9">
    <citation type="journal article" date="2001" name="J. Mol. Biol.">
        <title>The mitochondrial proteins Ssq1 and Jac1 are required for the assembly of iron sulfur clusters in mitochondria.</title>
        <authorList>
            <person name="Lutz T."/>
            <person name="Westermann B."/>
            <person name="Neupert W."/>
            <person name="Herrmann J.M."/>
        </authorList>
    </citation>
    <scope>INTERACTION WITH SSQ1</scope>
</reference>
<reference key="10">
    <citation type="journal article" date="2005" name="Mol. Cell. Biol.">
        <title>Pam17 is required for architecture and translocation activity of the mitochondrial protein import motor.</title>
        <authorList>
            <person name="van der Laan M."/>
            <person name="Chacinska A."/>
            <person name="Lind M."/>
            <person name="Perschil I."/>
            <person name="Sickmann A."/>
            <person name="Meyer H.E."/>
            <person name="Guiard B."/>
            <person name="Meisinger C."/>
            <person name="Pfanner N."/>
            <person name="Rehling P."/>
        </authorList>
    </citation>
    <scope>IDENTIFICATION IN THE PAM COMPLEX WITH PAM16; PAM17; PAM18; TIM44 AND SSC1</scope>
</reference>
<feature type="transit peptide" description="Mitochondrion" evidence="1">
    <location>
        <begin position="1"/>
        <end status="unknown"/>
    </location>
</feature>
<feature type="chain" id="PRO_0000013046" description="GrpE protein homolog, mitochondrial">
    <location>
        <begin status="unknown"/>
        <end position="228"/>
    </location>
</feature>
<feature type="region of interest" description="Disordered" evidence="2">
    <location>
        <begin position="46"/>
        <end position="66"/>
    </location>
</feature>
<feature type="compositionally biased region" description="Basic and acidic residues" evidence="2">
    <location>
        <begin position="46"/>
        <end position="57"/>
    </location>
</feature>
<comment type="function">
    <text evidence="5">Essential component of the PAM complex, a complex required for the translocation of transit peptide-containing proteins from the inner membrane into the mitochondrial matrix in an ATP-dependent manner. Seems to control the nucleotide-dependent binding of SSC1 to substrate proteins and the association of SSC1 with TIM44.</text>
</comment>
<comment type="subunit">
    <text evidence="3 4">Component of the PAM complex, at least composed of SSC1 (mtHsp70), MGE1, TIM44, PAM16/TIM16, PAM17 and PAM18/TIM14. Interacts with SSQ1.</text>
</comment>
<comment type="subcellular location">
    <subcellularLocation>
        <location evidence="7">Mitochondrion matrix</location>
    </subcellularLocation>
</comment>
<comment type="PTM">
    <text>The N-terminus is blocked.</text>
</comment>
<comment type="similarity">
    <text evidence="6">Belongs to the GrpE family.</text>
</comment>
<sequence>MRAFSAATVRATTRKSFIPMAPRTPFVTPSFTKNVGSMRRMRFYSDEAKSEESKENNEDLTEEQSEIKKLESQLSAKTKEASELKDRLLRSVADFRNLQQVTKKDIQKAKDFALQKFAKDLLESVDNFGHALNAFKEEDLQKSKEISDLYTGVRMTRDVFENTLRKHGIEKLDPLGEPFDPNKHEATFELPQPDKEPGTVFHVQQLGFTLNDRVIRPAKVGIVKGEEN</sequence>
<organism>
    <name type="scientific">Saccharomyces cerevisiae (strain ATCC 204508 / S288c)</name>
    <name type="common">Baker's yeast</name>
    <dbReference type="NCBI Taxonomy" id="559292"/>
    <lineage>
        <taxon>Eukaryota</taxon>
        <taxon>Fungi</taxon>
        <taxon>Dikarya</taxon>
        <taxon>Ascomycota</taxon>
        <taxon>Saccharomycotina</taxon>
        <taxon>Saccharomycetes</taxon>
        <taxon>Saccharomycetales</taxon>
        <taxon>Saccharomycetaceae</taxon>
        <taxon>Saccharomyces</taxon>
    </lineage>
</organism>